<reference key="1">
    <citation type="submission" date="1996-05" db="EMBL/GenBank/DDBJ databases">
        <authorList>
            <person name="Connerton I.F."/>
        </authorList>
    </citation>
    <scope>NUCLEOTIDE SEQUENCE [MRNA]</scope>
    <source>
        <tissue>Leaf</tissue>
    </source>
</reference>
<reference key="2">
    <citation type="journal article" date="1990" name="Biochem. J.">
        <title>The amino acid sequence of chymopapain from Carica papaya.</title>
        <authorList>
            <person name="Watson D.C."/>
            <person name="Yaguchi M."/>
            <person name="Lynn K.R."/>
        </authorList>
    </citation>
    <scope>PROTEIN SEQUENCE OF 135-352</scope>
</reference>
<reference key="3">
    <citation type="journal article" date="1989" name="Biol. Chem. Hoppe-Seyler">
        <title>The thiol proteinases from the latex of Carica papaya L. III. The primary structure of chymopapain.</title>
        <authorList>
            <person name="Jacquet A."/>
            <person name="Kleinschmidt T."/>
            <person name="Schnek A.G."/>
            <person name="Looze Y."/>
            <person name="Braunitzer G."/>
        </authorList>
    </citation>
    <scope>PROTEIN SEQUENCE OF 135-352</scope>
    <scope>CATALYTIC ACTIVITY</scope>
</reference>
<reference key="4">
    <citation type="journal article" date="1990" name="FEBS Lett.">
        <title>Selective cleavage of glycyl bonds by papaya proteinase IV.</title>
        <authorList>
            <person name="Buttle D.J."/>
            <person name="Ritonja A."/>
            <person name="Pearl L.H."/>
            <person name="Turk V."/>
            <person name="Barrett A.J."/>
        </authorList>
    </citation>
    <scope>FUNCTION</scope>
    <scope>CATALYTIC ACTIVITY</scope>
    <scope>BIOPHYSICOCHEMICAL PROPERTIES</scope>
</reference>
<reference key="5">
    <citation type="journal article" date="1996" name="Biochemistry">
        <title>Structure of chymopapain at 1.7-A resolution.</title>
        <authorList>
            <person name="Maes D."/>
            <person name="Bouckaert J."/>
            <person name="Poortmans F."/>
            <person name="Wyns L."/>
            <person name="Looze Y."/>
        </authorList>
    </citation>
    <scope>X-RAY CRYSTALLOGRAPHY (1.70 ANGSTROMS) OF 135-352</scope>
    <scope>DISULFIDE BONDS</scope>
</reference>
<organism>
    <name type="scientific">Carica papaya</name>
    <name type="common">Papaya</name>
    <dbReference type="NCBI Taxonomy" id="3649"/>
    <lineage>
        <taxon>Eukaryota</taxon>
        <taxon>Viridiplantae</taxon>
        <taxon>Streptophyta</taxon>
        <taxon>Embryophyta</taxon>
        <taxon>Tracheophyta</taxon>
        <taxon>Spermatophyta</taxon>
        <taxon>Magnoliopsida</taxon>
        <taxon>eudicotyledons</taxon>
        <taxon>Gunneridae</taxon>
        <taxon>Pentapetalae</taxon>
        <taxon>rosids</taxon>
        <taxon>malvids</taxon>
        <taxon>Brassicales</taxon>
        <taxon>Caricaceae</taxon>
        <taxon>Carica</taxon>
    </lineage>
</organism>
<sequence length="352" mass="39415">MATMSSISKIIFLATCLIIHMGLSSADFYTVGYSQDDLTSIERLIQLFDSWMLKHNKIYESIDEKIYRFEIFRDNLMYIDETNKKNNSYWLGLNGFADLSNDEFKKKYVGFVAEDFTGLEHFDNEDFTYKHVTNYPQSIDWRAKGAVTPVKNQGACGSCWAFSTIATVEGINKIVTGNLLELSEQELVDCDKHSYGCKGGYQTTSLQYVANNGVHTSKVYPYQAKQYKCRATDKPGPKVKITGYKRVPSNCETSFLGALANQPLSVLVEAGGKPFQLYKSGVFDGPCGTKLDHAVTAVGYGTSDGKNYIIIKNSWGPNWGEKGYMRLKRQSGNSQGTCGVYKSSYYPFKGFA</sequence>
<feature type="signal peptide" evidence="1">
    <location>
        <begin position="1"/>
        <end position="18"/>
    </location>
</feature>
<feature type="propeptide" id="PRO_0000026408" description="Activation peptide" evidence="6 8">
    <location>
        <begin position="19"/>
        <end position="134"/>
    </location>
</feature>
<feature type="chain" id="PRO_0000026409" description="Chymopapain">
    <location>
        <begin position="135"/>
        <end position="352"/>
    </location>
</feature>
<feature type="active site" evidence="3">
    <location>
        <position position="159"/>
    </location>
</feature>
<feature type="active site" evidence="4">
    <location>
        <position position="293"/>
    </location>
</feature>
<feature type="active site" evidence="5">
    <location>
        <position position="313"/>
    </location>
</feature>
<feature type="glycosylation site" description="N-linked (GlcNAc...) asparagine" evidence="2">
    <location>
        <position position="86"/>
    </location>
</feature>
<feature type="disulfide bond" evidence="9 10">
    <location>
        <begin position="156"/>
        <end position="197"/>
    </location>
</feature>
<feature type="disulfide bond" evidence="9 10">
    <location>
        <begin position="190"/>
        <end position="229"/>
    </location>
</feature>
<feature type="disulfide bond" evidence="9 10">
    <location>
        <begin position="287"/>
        <end position="338"/>
    </location>
</feature>
<feature type="turn" evidence="11">
    <location>
        <begin position="141"/>
        <end position="145"/>
    </location>
</feature>
<feature type="strand" evidence="11">
    <location>
        <begin position="155"/>
        <end position="157"/>
    </location>
</feature>
<feature type="helix" evidence="11">
    <location>
        <begin position="159"/>
        <end position="176"/>
    </location>
</feature>
<feature type="helix" evidence="11">
    <location>
        <begin position="184"/>
        <end position="190"/>
    </location>
</feature>
<feature type="helix" evidence="11">
    <location>
        <begin position="202"/>
        <end position="212"/>
    </location>
</feature>
<feature type="turn" evidence="11">
    <location>
        <begin position="217"/>
        <end position="219"/>
    </location>
</feature>
<feature type="helix" evidence="11">
    <location>
        <begin position="231"/>
        <end position="233"/>
    </location>
</feature>
<feature type="strand" evidence="11">
    <location>
        <begin position="242"/>
        <end position="246"/>
    </location>
</feature>
<feature type="strand" evidence="11">
    <location>
        <begin position="249"/>
        <end position="251"/>
    </location>
</feature>
<feature type="helix" evidence="11">
    <location>
        <begin position="252"/>
        <end position="259"/>
    </location>
</feature>
<feature type="strand" evidence="11">
    <location>
        <begin position="264"/>
        <end position="268"/>
    </location>
</feature>
<feature type="helix" evidence="11">
    <location>
        <begin position="273"/>
        <end position="276"/>
    </location>
</feature>
<feature type="strand" evidence="11">
    <location>
        <begin position="280"/>
        <end position="283"/>
    </location>
</feature>
<feature type="strand" evidence="11">
    <location>
        <begin position="293"/>
        <end position="303"/>
    </location>
</feature>
<feature type="strand" evidence="11">
    <location>
        <begin position="306"/>
        <end position="312"/>
    </location>
</feature>
<feature type="strand" evidence="11">
    <location>
        <begin position="324"/>
        <end position="328"/>
    </location>
</feature>
<feature type="strand" evidence="11">
    <location>
        <begin position="332"/>
        <end position="334"/>
    </location>
</feature>
<feature type="helix" evidence="11">
    <location>
        <begin position="337"/>
        <end position="339"/>
    </location>
</feature>
<feature type="strand" evidence="11">
    <location>
        <begin position="345"/>
        <end position="348"/>
    </location>
</feature>
<protein>
    <recommendedName>
        <fullName>Chymopapain</fullName>
        <ecNumber evidence="7">3.4.22.6</ecNumber>
    </recommendedName>
    <alternativeName>
        <fullName>Papaya proteinase II</fullName>
        <shortName>PPII</shortName>
    </alternativeName>
</protein>
<evidence type="ECO:0000255" key="1"/>
<evidence type="ECO:0000255" key="2">
    <source>
        <dbReference type="PROSITE-ProRule" id="PRU00498"/>
    </source>
</evidence>
<evidence type="ECO:0000255" key="3">
    <source>
        <dbReference type="PROSITE-ProRule" id="PRU10088"/>
    </source>
</evidence>
<evidence type="ECO:0000255" key="4">
    <source>
        <dbReference type="PROSITE-ProRule" id="PRU10089"/>
    </source>
</evidence>
<evidence type="ECO:0000255" key="5">
    <source>
        <dbReference type="PROSITE-ProRule" id="PRU10090"/>
    </source>
</evidence>
<evidence type="ECO:0000269" key="6">
    <source>
    </source>
</evidence>
<evidence type="ECO:0000269" key="7">
    <source>
    </source>
</evidence>
<evidence type="ECO:0000269" key="8">
    <source>
    </source>
</evidence>
<evidence type="ECO:0000269" key="9">
    <source>
    </source>
</evidence>
<evidence type="ECO:0007744" key="10">
    <source>
        <dbReference type="PDB" id="1YAL"/>
    </source>
</evidence>
<evidence type="ECO:0007829" key="11">
    <source>
        <dbReference type="PDB" id="1YAL"/>
    </source>
</evidence>
<proteinExistence type="evidence at protein level"/>
<comment type="function">
    <text evidence="7">Cysteine proteinase with a high level of diversity in substrate specificity.</text>
</comment>
<comment type="catalytic activity">
    <reaction evidence="7">
        <text>Specificity similar to that of papain.</text>
        <dbReference type="EC" id="3.4.22.6"/>
    </reaction>
</comment>
<comment type="biophysicochemical properties">
    <kinetics>
        <KM evidence="7">4.2 mM for Boc-Ala-Ala-Gly-NHPhNO(2)</KM>
        <KM evidence="7">0.23 mM for Boc-Ala-Ala-Gly-NHMec</KM>
        <text evidence="7">kcat is 0.5 sec(-1) with Boc-Ala-Ala-Gly-NHPhNO(2) as substrate (PubMed:2404797). kcat is 0.4 sec(-1) with Boc-Ala-Ala-Gly-NHMec as substrate (PubMed:2404797).</text>
    </kinetics>
</comment>
<comment type="similarity">
    <text evidence="3 4 5">Belongs to the peptidase C1 family.</text>
</comment>
<keyword id="KW-0002">3D-structure</keyword>
<keyword id="KW-0903">Direct protein sequencing</keyword>
<keyword id="KW-1015">Disulfide bond</keyword>
<keyword id="KW-0325">Glycoprotein</keyword>
<keyword id="KW-0378">Hydrolase</keyword>
<keyword id="KW-0645">Protease</keyword>
<keyword id="KW-0732">Signal</keyword>
<keyword id="KW-0788">Thiol protease</keyword>
<keyword id="KW-0865">Zymogen</keyword>
<accession>P14080</accession>
<name>PAPA2_CARPA</name>
<dbReference type="EC" id="3.4.22.6" evidence="7"/>
<dbReference type="EMBL" id="X97789">
    <property type="protein sequence ID" value="CAA66378.1"/>
    <property type="molecule type" value="mRNA"/>
</dbReference>
<dbReference type="PIR" id="T09760">
    <property type="entry name" value="T09760"/>
</dbReference>
<dbReference type="PDB" id="1YAL">
    <property type="method" value="X-ray"/>
    <property type="resolution" value="1.70 A"/>
    <property type="chains" value="A=135-352"/>
</dbReference>
<dbReference type="PDBsum" id="1YAL"/>
<dbReference type="SMR" id="P14080"/>
<dbReference type="Allergome" id="1540">
    <property type="allergen name" value="Cari p Chymopapain"/>
</dbReference>
<dbReference type="MEROPS" id="C01.002"/>
<dbReference type="MEROPS" id="I29.003"/>
<dbReference type="KEGG" id="ag:CAA66378"/>
<dbReference type="BRENDA" id="3.4.22.6">
    <property type="organism ID" value="1191"/>
</dbReference>
<dbReference type="EvolutionaryTrace" id="P14080"/>
<dbReference type="GO" id="GO:0008234">
    <property type="term" value="F:cysteine-type peptidase activity"/>
    <property type="evidence" value="ECO:0007669"/>
    <property type="project" value="UniProtKB-KW"/>
</dbReference>
<dbReference type="GO" id="GO:0006508">
    <property type="term" value="P:proteolysis"/>
    <property type="evidence" value="ECO:0007669"/>
    <property type="project" value="UniProtKB-KW"/>
</dbReference>
<dbReference type="CDD" id="cd02248">
    <property type="entry name" value="Peptidase_C1A"/>
    <property type="match status" value="1"/>
</dbReference>
<dbReference type="FunFam" id="3.90.70.10:FF:000204">
    <property type="entry name" value="Papain"/>
    <property type="match status" value="1"/>
</dbReference>
<dbReference type="Gene3D" id="3.90.70.10">
    <property type="entry name" value="Cysteine proteinases"/>
    <property type="match status" value="1"/>
</dbReference>
<dbReference type="InterPro" id="IPR038765">
    <property type="entry name" value="Papain-like_cys_pep_sf"/>
</dbReference>
<dbReference type="InterPro" id="IPR025661">
    <property type="entry name" value="Pept_asp_AS"/>
</dbReference>
<dbReference type="InterPro" id="IPR000169">
    <property type="entry name" value="Pept_cys_AS"/>
</dbReference>
<dbReference type="InterPro" id="IPR025660">
    <property type="entry name" value="Pept_his_AS"/>
</dbReference>
<dbReference type="InterPro" id="IPR013128">
    <property type="entry name" value="Peptidase_C1A"/>
</dbReference>
<dbReference type="InterPro" id="IPR000668">
    <property type="entry name" value="Peptidase_C1A_C"/>
</dbReference>
<dbReference type="InterPro" id="IPR039417">
    <property type="entry name" value="Peptidase_C1A_papain-like"/>
</dbReference>
<dbReference type="InterPro" id="IPR013201">
    <property type="entry name" value="Prot_inhib_I29"/>
</dbReference>
<dbReference type="PANTHER" id="PTHR12411">
    <property type="entry name" value="CYSTEINE PROTEASE FAMILY C1-RELATED"/>
    <property type="match status" value="1"/>
</dbReference>
<dbReference type="Pfam" id="PF08246">
    <property type="entry name" value="Inhibitor_I29"/>
    <property type="match status" value="1"/>
</dbReference>
<dbReference type="Pfam" id="PF00112">
    <property type="entry name" value="Peptidase_C1"/>
    <property type="match status" value="1"/>
</dbReference>
<dbReference type="PRINTS" id="PR00705">
    <property type="entry name" value="PAPAIN"/>
</dbReference>
<dbReference type="SMART" id="SM00848">
    <property type="entry name" value="Inhibitor_I29"/>
    <property type="match status" value="1"/>
</dbReference>
<dbReference type="SMART" id="SM00645">
    <property type="entry name" value="Pept_C1"/>
    <property type="match status" value="1"/>
</dbReference>
<dbReference type="SUPFAM" id="SSF54001">
    <property type="entry name" value="Cysteine proteinases"/>
    <property type="match status" value="1"/>
</dbReference>
<dbReference type="PROSITE" id="PS00640">
    <property type="entry name" value="THIOL_PROTEASE_ASN"/>
    <property type="match status" value="1"/>
</dbReference>
<dbReference type="PROSITE" id="PS00139">
    <property type="entry name" value="THIOL_PROTEASE_CYS"/>
    <property type="match status" value="1"/>
</dbReference>
<dbReference type="PROSITE" id="PS00639">
    <property type="entry name" value="THIOL_PROTEASE_HIS"/>
    <property type="match status" value="1"/>
</dbReference>